<accession>P50250</accession>
<accession>Q7K6A6</accession>
<accession>Q8MUG1</accession>
<evidence type="ECO:0000269" key="1">
    <source>
    </source>
</evidence>
<evidence type="ECO:0000305" key="2"/>
<evidence type="ECO:0007829" key="3">
    <source>
        <dbReference type="PDB" id="1V8B"/>
    </source>
</evidence>
<gene>
    <name type="ORF">PFE1050w</name>
</gene>
<keyword id="KW-0002">3D-structure</keyword>
<keyword id="KW-0378">Hydrolase</keyword>
<keyword id="KW-0520">NAD</keyword>
<keyword id="KW-0554">One-carbon metabolism</keyword>
<keyword id="KW-1185">Reference proteome</keyword>
<reference key="1">
    <citation type="journal article" date="1994" name="J. Biol. Chem.">
        <title>Plasmodium falciparum S-adenosylhomocysteine hydrolase. cDNA identification, predicted protein sequence, and expression in Escherichia coli.</title>
        <authorList>
            <person name="Creedon K.A."/>
            <person name="Rathod P.K."/>
            <person name="Wellems T.E."/>
        </authorList>
    </citation>
    <scope>NUCLEOTIDE SEQUENCE [MRNA]</scope>
</reference>
<reference key="2">
    <citation type="submission" date="2002-06" db="EMBL/GenBank/DDBJ databases">
        <title>S-adenosyl-L-homocysteine hydrolase from Plasmodium falciparum: structure, evolution, and interactions with inhibitors.</title>
        <authorList>
            <person name="Bujnicki J.M."/>
            <person name="Prigge S.T."/>
            <person name="Caridha D."/>
            <person name="Chiang P.K."/>
        </authorList>
    </citation>
    <scope>NUCLEOTIDE SEQUENCE [GENOMIC DNA]</scope>
</reference>
<reference key="3">
    <citation type="journal article" date="2002" name="Nature">
        <title>Genome sequence of the human malaria parasite Plasmodium falciparum.</title>
        <authorList>
            <person name="Gardner M.J."/>
            <person name="Hall N."/>
            <person name="Fung E."/>
            <person name="White O."/>
            <person name="Berriman M."/>
            <person name="Hyman R.W."/>
            <person name="Carlton J.M."/>
            <person name="Pain A."/>
            <person name="Nelson K.E."/>
            <person name="Bowman S."/>
            <person name="Paulsen I.T."/>
            <person name="James K.D."/>
            <person name="Eisen J.A."/>
            <person name="Rutherford K.M."/>
            <person name="Salzberg S.L."/>
            <person name="Craig A."/>
            <person name="Kyes S."/>
            <person name="Chan M.-S."/>
            <person name="Nene V."/>
            <person name="Shallom S.J."/>
            <person name="Suh B."/>
            <person name="Peterson J."/>
            <person name="Angiuoli S."/>
            <person name="Pertea M."/>
            <person name="Allen J."/>
            <person name="Selengut J."/>
            <person name="Haft D."/>
            <person name="Mather M.W."/>
            <person name="Vaidya A.B."/>
            <person name="Martin D.M.A."/>
            <person name="Fairlamb A.H."/>
            <person name="Fraunholz M.J."/>
            <person name="Roos D.S."/>
            <person name="Ralph S.A."/>
            <person name="McFadden G.I."/>
            <person name="Cummings L.M."/>
            <person name="Subramanian G.M."/>
            <person name="Mungall C."/>
            <person name="Venter J.C."/>
            <person name="Carucci D.J."/>
            <person name="Hoffman S.L."/>
            <person name="Newbold C."/>
            <person name="Davis R.W."/>
            <person name="Fraser C.M."/>
            <person name="Barrell B.G."/>
        </authorList>
    </citation>
    <scope>NUCLEOTIDE SEQUENCE [LARGE SCALE GENOMIC DNA]</scope>
    <source>
        <strain>3D7</strain>
    </source>
</reference>
<reference key="4">
    <citation type="journal article" date="2002" name="Nature">
        <title>Sequence of Plasmodium falciparum chromosomes 1, 3-9 and 13.</title>
        <authorList>
            <person name="Hall N."/>
            <person name="Pain A."/>
            <person name="Berriman M."/>
            <person name="Churcher C.M."/>
            <person name="Harris B."/>
            <person name="Harris D."/>
            <person name="Mungall K.L."/>
            <person name="Bowman S."/>
            <person name="Atkin R."/>
            <person name="Baker S."/>
            <person name="Barron A."/>
            <person name="Brooks K."/>
            <person name="Buckee C.O."/>
            <person name="Burrows C."/>
            <person name="Cherevach I."/>
            <person name="Chillingworth C."/>
            <person name="Chillingworth T."/>
            <person name="Christodoulou Z."/>
            <person name="Clark L."/>
            <person name="Clark R."/>
            <person name="Corton C."/>
            <person name="Cronin A."/>
            <person name="Davies R.M."/>
            <person name="Davis P."/>
            <person name="Dear P."/>
            <person name="Dearden F."/>
            <person name="Doggett J."/>
            <person name="Feltwell T."/>
            <person name="Goble A."/>
            <person name="Goodhead I."/>
            <person name="Gwilliam R."/>
            <person name="Hamlin N."/>
            <person name="Hance Z."/>
            <person name="Harper D."/>
            <person name="Hauser H."/>
            <person name="Hornsby T."/>
            <person name="Holroyd S."/>
            <person name="Horrocks P."/>
            <person name="Humphray S."/>
            <person name="Jagels K."/>
            <person name="James K.D."/>
            <person name="Johnson D."/>
            <person name="Kerhornou A."/>
            <person name="Knights A."/>
            <person name="Konfortov B."/>
            <person name="Kyes S."/>
            <person name="Larke N."/>
            <person name="Lawson D."/>
            <person name="Lennard N."/>
            <person name="Line A."/>
            <person name="Maddison M."/>
            <person name="Mclean J."/>
            <person name="Mooney P."/>
            <person name="Moule S."/>
            <person name="Murphy L."/>
            <person name="Oliver K."/>
            <person name="Ormond D."/>
            <person name="Price C."/>
            <person name="Quail M.A."/>
            <person name="Rabbinowitsch E."/>
            <person name="Rajandream M.A."/>
            <person name="Rutter S."/>
            <person name="Rutherford K.M."/>
            <person name="Sanders M."/>
            <person name="Simmonds M."/>
            <person name="Seeger K."/>
            <person name="Sharp S."/>
            <person name="Smith R."/>
            <person name="Squares R."/>
            <person name="Squares S."/>
            <person name="Stevens K."/>
            <person name="Taylor K."/>
            <person name="Tivey A."/>
            <person name="Unwin L."/>
            <person name="Whitehead S."/>
            <person name="Woodward J.R."/>
            <person name="Sulston J.E."/>
            <person name="Craig A."/>
            <person name="Newbold C."/>
            <person name="Barrell B.G."/>
        </authorList>
    </citation>
    <scope>NUCLEOTIDE SEQUENCE [LARGE SCALE GENOMIC DNA]</scope>
    <source>
        <strain>3D7</strain>
    </source>
</reference>
<reference key="5">
    <citation type="journal article" date="2004" name="J. Mol. Biol.">
        <title>Crystal structure of S-adenosyl-L-homocysteine hydrolase from the human malaria parasite Plasmodium falciparum.</title>
        <authorList>
            <person name="Tanaka N."/>
            <person name="Nakanishi M."/>
            <person name="Kusakabe Y."/>
            <person name="Shiraiwa K."/>
            <person name="Yabe S."/>
            <person name="Ito Y."/>
            <person name="Kitade Y."/>
            <person name="Nakamura K.T."/>
        </authorList>
    </citation>
    <scope>X-RAY CRYSTALLOGRAPHY (2.4 ANGSTROMS) IN COMPLEX WITH NAD AND ADENOSINE</scope>
    <scope>SUBUNIT</scope>
    <scope>MUTAGENESIS OF CYS-59</scope>
</reference>
<organism>
    <name type="scientific">Plasmodium falciparum (isolate 3D7)</name>
    <dbReference type="NCBI Taxonomy" id="36329"/>
    <lineage>
        <taxon>Eukaryota</taxon>
        <taxon>Sar</taxon>
        <taxon>Alveolata</taxon>
        <taxon>Apicomplexa</taxon>
        <taxon>Aconoidasida</taxon>
        <taxon>Haemosporida</taxon>
        <taxon>Plasmodiidae</taxon>
        <taxon>Plasmodium</taxon>
        <taxon>Plasmodium (Laverania)</taxon>
    </lineage>
</organism>
<proteinExistence type="evidence at protein level"/>
<protein>
    <recommendedName>
        <fullName>Adenosylhomocysteinase</fullName>
        <shortName>AdoHcyase</shortName>
        <ecNumber>3.13.2.1</ecNumber>
    </recommendedName>
    <alternativeName>
        <fullName>PfSAHH</fullName>
    </alternativeName>
    <alternativeName>
        <fullName>S-adenosyl-L-homocysteine hydrolase</fullName>
    </alternativeName>
</protein>
<comment type="function">
    <text>Adenosylhomocysteine is a competitive inhibitor of S-adenosyl-L-methionine-dependent methyl transferase reactions; therefore adenosylhomocysteinase may play a key role in the control of methylations via regulation of the intracellular concentration of adenosylhomocysteine.</text>
</comment>
<comment type="catalytic activity">
    <reaction>
        <text>S-adenosyl-L-homocysteine + H2O = L-homocysteine + adenosine</text>
        <dbReference type="Rhea" id="RHEA:21708"/>
        <dbReference type="ChEBI" id="CHEBI:15377"/>
        <dbReference type="ChEBI" id="CHEBI:16335"/>
        <dbReference type="ChEBI" id="CHEBI:57856"/>
        <dbReference type="ChEBI" id="CHEBI:58199"/>
        <dbReference type="EC" id="3.13.2.1"/>
    </reaction>
</comment>
<comment type="cofactor">
    <cofactor>
        <name>NAD(+)</name>
        <dbReference type="ChEBI" id="CHEBI:57540"/>
    </cofactor>
    <text>Binds 1 NAD(+) per subunit.</text>
</comment>
<comment type="pathway">
    <text>Amino-acid biosynthesis; L-homocysteine biosynthesis; L-homocysteine from S-adenosyl-L-homocysteine: step 1/1.</text>
</comment>
<comment type="subunit">
    <text evidence="1">Homotetramer.</text>
</comment>
<comment type="similarity">
    <text evidence="2">Belongs to the adenosylhomocysteinase family.</text>
</comment>
<feature type="chain" id="PRO_0000116917" description="Adenosylhomocysteinase">
    <location>
        <begin position="1"/>
        <end position="479"/>
    </location>
</feature>
<feature type="binding site">
    <location>
        <position position="56"/>
    </location>
    <ligand>
        <name>substrate</name>
    </ligand>
</feature>
<feature type="binding site">
    <location>
        <position position="134"/>
    </location>
    <ligand>
        <name>substrate</name>
    </ligand>
</feature>
<feature type="binding site">
    <location>
        <position position="200"/>
    </location>
    <ligand>
        <name>substrate</name>
    </ligand>
</feature>
<feature type="binding site" evidence="1">
    <location>
        <begin position="201"/>
        <end position="203"/>
    </location>
    <ligand>
        <name>NAD(+)</name>
        <dbReference type="ChEBI" id="CHEBI:57540"/>
    </ligand>
</feature>
<feature type="binding site">
    <location>
        <position position="230"/>
    </location>
    <ligand>
        <name>substrate</name>
    </ligand>
</feature>
<feature type="binding site">
    <location>
        <position position="234"/>
    </location>
    <ligand>
        <name>substrate</name>
    </ligand>
</feature>
<feature type="binding site" evidence="1">
    <location>
        <position position="235"/>
    </location>
    <ligand>
        <name>NAD(+)</name>
        <dbReference type="ChEBI" id="CHEBI:57540"/>
    </ligand>
</feature>
<feature type="binding site" evidence="1">
    <location>
        <begin position="264"/>
        <end position="269"/>
    </location>
    <ligand>
        <name>NAD(+)</name>
        <dbReference type="ChEBI" id="CHEBI:57540"/>
    </ligand>
</feature>
<feature type="binding site" evidence="1">
    <location>
        <position position="287"/>
    </location>
    <ligand>
        <name>NAD(+)</name>
        <dbReference type="ChEBI" id="CHEBI:57540"/>
    </ligand>
</feature>
<feature type="binding site" evidence="1">
    <location>
        <position position="322"/>
    </location>
    <ligand>
        <name>NAD(+)</name>
        <dbReference type="ChEBI" id="CHEBI:57540"/>
    </ligand>
</feature>
<feature type="binding site" evidence="1">
    <location>
        <begin position="343"/>
        <end position="345"/>
    </location>
    <ligand>
        <name>NAD(+)</name>
        <dbReference type="ChEBI" id="CHEBI:57540"/>
    </ligand>
</feature>
<feature type="binding site" evidence="1">
    <location>
        <position position="391"/>
    </location>
    <ligand>
        <name>NAD(+)</name>
        <dbReference type="ChEBI" id="CHEBI:57540"/>
    </ligand>
</feature>
<feature type="site" description="Important for nucleoside inhibitor binding">
    <location>
        <position position="59"/>
    </location>
</feature>
<feature type="mutagenesis site" description="Decreases sensitivity towards inhibitors." evidence="1">
    <original>C</original>
    <variation>T</variation>
    <location>
        <position position="59"/>
    </location>
</feature>
<feature type="sequence conflict" description="In Ref. 1; AAA21391." evidence="2" ref="1">
    <original>LP</original>
    <variation>YT</variation>
    <location>
        <begin position="243"/>
        <end position="244"/>
    </location>
</feature>
<feature type="helix" evidence="3">
    <location>
        <begin position="11"/>
        <end position="13"/>
    </location>
</feature>
<feature type="helix" evidence="3">
    <location>
        <begin position="14"/>
        <end position="24"/>
    </location>
</feature>
<feature type="helix" evidence="3">
    <location>
        <begin position="25"/>
        <end position="27"/>
    </location>
</feature>
<feature type="helix" evidence="3">
    <location>
        <begin position="29"/>
        <end position="37"/>
    </location>
</feature>
<feature type="turn" evidence="3">
    <location>
        <begin position="39"/>
        <end position="41"/>
    </location>
</feature>
<feature type="turn" evidence="3">
    <location>
        <begin position="43"/>
        <end position="46"/>
    </location>
</feature>
<feature type="strand" evidence="3">
    <location>
        <begin position="48"/>
        <end position="53"/>
    </location>
</feature>
<feature type="helix" evidence="3">
    <location>
        <begin position="57"/>
        <end position="68"/>
    </location>
</feature>
<feature type="strand" evidence="3">
    <location>
        <begin position="72"/>
        <end position="76"/>
    </location>
</feature>
<feature type="strand" evidence="3">
    <location>
        <begin position="78"/>
        <end position="81"/>
    </location>
</feature>
<feature type="helix" evidence="3">
    <location>
        <begin position="85"/>
        <end position="91"/>
    </location>
</feature>
<feature type="strand" evidence="3">
    <location>
        <begin position="97"/>
        <end position="100"/>
    </location>
</feature>
<feature type="helix" evidence="3">
    <location>
        <begin position="107"/>
        <end position="118"/>
    </location>
</feature>
<feature type="strand" evidence="3">
    <location>
        <begin position="121"/>
        <end position="125"/>
    </location>
</feature>
<feature type="strand" evidence="3">
    <location>
        <begin position="129"/>
        <end position="136"/>
    </location>
</feature>
<feature type="helix" evidence="3">
    <location>
        <begin position="137"/>
        <end position="155"/>
    </location>
</feature>
<feature type="helix" evidence="3">
    <location>
        <begin position="161"/>
        <end position="163"/>
    </location>
</feature>
<feature type="helix" evidence="3">
    <location>
        <begin position="167"/>
        <end position="180"/>
    </location>
</feature>
<feature type="helix" evidence="3">
    <location>
        <begin position="186"/>
        <end position="191"/>
    </location>
</feature>
<feature type="strand" evidence="3">
    <location>
        <begin position="196"/>
        <end position="199"/>
    </location>
</feature>
<feature type="helix" evidence="3">
    <location>
        <begin position="202"/>
        <end position="213"/>
    </location>
</feature>
<feature type="strand" evidence="3">
    <location>
        <begin position="219"/>
        <end position="223"/>
    </location>
</feature>
<feature type="helix" evidence="3">
    <location>
        <begin position="228"/>
        <end position="231"/>
    </location>
</feature>
<feature type="helix" evidence="3">
    <location>
        <begin position="234"/>
        <end position="251"/>
    </location>
</feature>
<feature type="strand" evidence="3">
    <location>
        <begin position="258"/>
        <end position="263"/>
    </location>
</feature>
<feature type="helix" evidence="3">
    <location>
        <begin position="267"/>
        <end position="279"/>
    </location>
</feature>
<feature type="strand" evidence="3">
    <location>
        <begin position="282"/>
        <end position="286"/>
    </location>
</feature>
<feature type="helix" evidence="3">
    <location>
        <begin position="290"/>
        <end position="297"/>
    </location>
</feature>
<feature type="turn" evidence="3">
    <location>
        <begin position="298"/>
        <end position="300"/>
    </location>
</feature>
<feature type="helix" evidence="3">
    <location>
        <begin position="306"/>
        <end position="309"/>
    </location>
</feature>
<feature type="turn" evidence="3">
    <location>
        <begin position="310"/>
        <end position="312"/>
    </location>
</feature>
<feature type="strand" evidence="3">
    <location>
        <begin position="314"/>
        <end position="318"/>
    </location>
</feature>
<feature type="strand" evidence="3">
    <location>
        <begin position="321"/>
        <end position="326"/>
    </location>
</feature>
<feature type="helix" evidence="3">
    <location>
        <begin position="328"/>
        <end position="331"/>
    </location>
</feature>
<feature type="strand" evidence="3">
    <location>
        <begin position="339"/>
        <end position="342"/>
    </location>
</feature>
<feature type="turn" evidence="3">
    <location>
        <begin position="346"/>
        <end position="348"/>
    </location>
</feature>
<feature type="helix" evidence="3">
    <location>
        <begin position="352"/>
        <end position="356"/>
    </location>
</feature>
<feature type="strand" evidence="3">
    <location>
        <begin position="362"/>
        <end position="367"/>
    </location>
</feature>
<feature type="strand" evidence="3">
    <location>
        <begin position="370"/>
        <end position="374"/>
    </location>
</feature>
<feature type="strand" evidence="3">
    <location>
        <begin position="380"/>
        <end position="384"/>
    </location>
</feature>
<feature type="helix" evidence="3">
    <location>
        <begin position="385"/>
        <end position="387"/>
    </location>
</feature>
<feature type="helix" evidence="3">
    <location>
        <begin position="390"/>
        <end position="393"/>
    </location>
</feature>
<feature type="helix" evidence="3">
    <location>
        <begin position="400"/>
        <end position="419"/>
    </location>
</feature>
<feature type="turn" evidence="3">
    <location>
        <begin position="420"/>
        <end position="422"/>
    </location>
</feature>
<feature type="strand" evidence="3">
    <location>
        <begin position="423"/>
        <end position="425"/>
    </location>
</feature>
<feature type="strand" evidence="3">
    <location>
        <begin position="428"/>
        <end position="431"/>
    </location>
</feature>
<feature type="helix" evidence="3">
    <location>
        <begin position="435"/>
        <end position="446"/>
    </location>
</feature>
<feature type="helix" evidence="3">
    <location>
        <begin position="447"/>
        <end position="449"/>
    </location>
</feature>
<feature type="helix" evidence="3">
    <location>
        <begin position="458"/>
        <end position="464"/>
    </location>
</feature>
<sequence length="479" mass="53839">MVENKSKVKDISLAPFGKMQMEISENEMPGLMRIREEYGKDQPLKNAKITGCLHMTVECALLIETLQKLGAQIRWCSCNIYSTADYAAAAVSTLENVTVFAWKNETLEEYWWCVESALTWGDGDDNGPDMIVDDGGDATLLVHKGVEYEKLYEEKNILPDPEKAKNEEERCFLTLLKNSILKNPKKWTNIAKKIIGVSEETTTGVLRLKKMDKQNELLFTAINVNDAVTKQKYDNVYGCRHSLPDGLMRATDFLISGKIVVICGYGDVGKGCASSMKGLGARVYITEIDPICAIQAVMEGFNVVTLDEIVDKGDFFITCTGNVDVIKLEHLLKMKNNAVVGNIGHFDDEIQVNELFNYKGIHIENVKPQVDRITLPNGNKIIVLARGRLLNLGCATGHPAFVMSFSFCNQTFAQLDLWQNKDTNKYENKVYLLPKHLDEKVALYHLKKLNASLTELDDNQCQFLGVNKSGPFKSNEYRY</sequence>
<dbReference type="EC" id="3.13.2.1"/>
<dbReference type="EMBL" id="U07365">
    <property type="protein sequence ID" value="AAA21391.1"/>
    <property type="molecule type" value="mRNA"/>
</dbReference>
<dbReference type="EMBL" id="AF525293">
    <property type="protein sequence ID" value="AAM90981.1"/>
    <property type="molecule type" value="Genomic_DNA"/>
</dbReference>
<dbReference type="EMBL" id="AL844504">
    <property type="protein sequence ID" value="CAD51574.1"/>
    <property type="molecule type" value="Genomic_DNA"/>
</dbReference>
<dbReference type="PIR" id="A54040">
    <property type="entry name" value="A54040"/>
</dbReference>
<dbReference type="RefSeq" id="XP_001351767.1">
    <property type="nucleotide sequence ID" value="XM_001351731.1"/>
</dbReference>
<dbReference type="PDB" id="1V8B">
    <property type="method" value="X-ray"/>
    <property type="resolution" value="2.40 A"/>
    <property type="chains" value="A/B/C/D=1-479"/>
</dbReference>
<dbReference type="PDBsum" id="1V8B"/>
<dbReference type="SMR" id="P50250"/>
<dbReference type="BioGRID" id="1208339">
    <property type="interactions" value="9"/>
</dbReference>
<dbReference type="FunCoup" id="P50250">
    <property type="interactions" value="241"/>
</dbReference>
<dbReference type="IntAct" id="P50250">
    <property type="interactions" value="8"/>
</dbReference>
<dbReference type="STRING" id="36329.P50250"/>
<dbReference type="BindingDB" id="P50250"/>
<dbReference type="ChEMBL" id="CHEMBL6076"/>
<dbReference type="DrugBank" id="DB11638">
    <property type="generic name" value="Artenimol"/>
</dbReference>
<dbReference type="SwissPalm" id="P50250"/>
<dbReference type="PaxDb" id="5833-PFE1050w"/>
<dbReference type="EnsemblProtists" id="CAD51574">
    <property type="protein sequence ID" value="CAD51574"/>
    <property type="gene ID" value="PF3D7_0520900"/>
</dbReference>
<dbReference type="KEGG" id="pfa:PF3D7_0520900"/>
<dbReference type="VEuPathDB" id="PlasmoDB:PF3D7_0520900"/>
<dbReference type="HOGENOM" id="CLU_025194_2_1_1"/>
<dbReference type="InParanoid" id="P50250"/>
<dbReference type="OMA" id="YIGVTVE"/>
<dbReference type="OrthoDB" id="10007170at2759"/>
<dbReference type="PhylomeDB" id="P50250"/>
<dbReference type="BRENDA" id="3.3.1.1">
    <property type="organism ID" value="4889"/>
</dbReference>
<dbReference type="UniPathway" id="UPA00314">
    <property type="reaction ID" value="UER00076"/>
</dbReference>
<dbReference type="EvolutionaryTrace" id="P50250"/>
<dbReference type="PRO" id="PR:P50250"/>
<dbReference type="Proteomes" id="UP000001450">
    <property type="component" value="Chromosome 5"/>
</dbReference>
<dbReference type="GO" id="GO:0005829">
    <property type="term" value="C:cytosol"/>
    <property type="evidence" value="ECO:0000318"/>
    <property type="project" value="GO_Central"/>
</dbReference>
<dbReference type="GO" id="GO:0004013">
    <property type="term" value="F:adenosylhomocysteinase activity"/>
    <property type="evidence" value="ECO:0000318"/>
    <property type="project" value="GO_Central"/>
</dbReference>
<dbReference type="GO" id="GO:0006730">
    <property type="term" value="P:one-carbon metabolic process"/>
    <property type="evidence" value="ECO:0007669"/>
    <property type="project" value="UniProtKB-KW"/>
</dbReference>
<dbReference type="GO" id="GO:0033353">
    <property type="term" value="P:S-adenosylmethionine cycle"/>
    <property type="evidence" value="ECO:0000318"/>
    <property type="project" value="GO_Central"/>
</dbReference>
<dbReference type="CDD" id="cd00401">
    <property type="entry name" value="SAHH"/>
    <property type="match status" value="1"/>
</dbReference>
<dbReference type="FunFam" id="3.40.50.1480:FF:000011">
    <property type="entry name" value="Adenosylhomocysteinase"/>
    <property type="match status" value="1"/>
</dbReference>
<dbReference type="FunFam" id="3.40.50.720:FF:000004">
    <property type="entry name" value="Adenosylhomocysteinase"/>
    <property type="match status" value="1"/>
</dbReference>
<dbReference type="Gene3D" id="3.40.50.1480">
    <property type="entry name" value="Adenosylhomocysteinase-like"/>
    <property type="match status" value="1"/>
</dbReference>
<dbReference type="Gene3D" id="3.40.50.720">
    <property type="entry name" value="NAD(P)-binding Rossmann-like Domain"/>
    <property type="match status" value="1"/>
</dbReference>
<dbReference type="HAMAP" id="MF_00563">
    <property type="entry name" value="AdoHcyase"/>
    <property type="match status" value="1"/>
</dbReference>
<dbReference type="InterPro" id="IPR042172">
    <property type="entry name" value="Adenosylhomocyst_ase-like_sf"/>
</dbReference>
<dbReference type="InterPro" id="IPR000043">
    <property type="entry name" value="Adenosylhomocysteinase-like"/>
</dbReference>
<dbReference type="InterPro" id="IPR015878">
    <property type="entry name" value="Ado_hCys_hydrolase_NAD-bd"/>
</dbReference>
<dbReference type="InterPro" id="IPR036291">
    <property type="entry name" value="NAD(P)-bd_dom_sf"/>
</dbReference>
<dbReference type="InterPro" id="IPR020082">
    <property type="entry name" value="S-Ado-L-homoCys_hydrolase_CS"/>
</dbReference>
<dbReference type="NCBIfam" id="TIGR00936">
    <property type="entry name" value="ahcY"/>
    <property type="match status" value="1"/>
</dbReference>
<dbReference type="NCBIfam" id="NF004005">
    <property type="entry name" value="PRK05476.2-3"/>
    <property type="match status" value="1"/>
</dbReference>
<dbReference type="PANTHER" id="PTHR23420">
    <property type="entry name" value="ADENOSYLHOMOCYSTEINASE"/>
    <property type="match status" value="1"/>
</dbReference>
<dbReference type="PANTHER" id="PTHR23420:SF0">
    <property type="entry name" value="ADENOSYLHOMOCYSTEINASE"/>
    <property type="match status" value="1"/>
</dbReference>
<dbReference type="Pfam" id="PF05221">
    <property type="entry name" value="AdoHcyase"/>
    <property type="match status" value="1"/>
</dbReference>
<dbReference type="Pfam" id="PF00670">
    <property type="entry name" value="AdoHcyase_NAD"/>
    <property type="match status" value="1"/>
</dbReference>
<dbReference type="PIRSF" id="PIRSF001109">
    <property type="entry name" value="Ad_hcy_hydrolase"/>
    <property type="match status" value="1"/>
</dbReference>
<dbReference type="SMART" id="SM00996">
    <property type="entry name" value="AdoHcyase"/>
    <property type="match status" value="1"/>
</dbReference>
<dbReference type="SMART" id="SM00997">
    <property type="entry name" value="AdoHcyase_NAD"/>
    <property type="match status" value="1"/>
</dbReference>
<dbReference type="SUPFAM" id="SSF52283">
    <property type="entry name" value="Formate/glycerate dehydrogenase catalytic domain-like"/>
    <property type="match status" value="2"/>
</dbReference>
<dbReference type="SUPFAM" id="SSF51735">
    <property type="entry name" value="NAD(P)-binding Rossmann-fold domains"/>
    <property type="match status" value="1"/>
</dbReference>
<dbReference type="PROSITE" id="PS00738">
    <property type="entry name" value="ADOHCYASE_1"/>
    <property type="match status" value="1"/>
</dbReference>
<dbReference type="PROSITE" id="PS00739">
    <property type="entry name" value="ADOHCYASE_2"/>
    <property type="match status" value="1"/>
</dbReference>
<name>SAHH_PLAF7</name>